<accession>A6NGZ8</accession>
<feature type="signal peptide" evidence="1">
    <location>
        <begin position="1"/>
        <end position="26"/>
    </location>
</feature>
<feature type="chain" id="PRO_0000348247" description="Small integral membrane protein 9">
    <location>
        <begin position="27"/>
        <end position="99"/>
    </location>
</feature>
<feature type="topological domain" description="Extracellular" evidence="1">
    <location>
        <begin position="27"/>
        <end position="73"/>
    </location>
</feature>
<feature type="transmembrane region" description="Helical" evidence="1">
    <location>
        <begin position="74"/>
        <end position="94"/>
    </location>
</feature>
<feature type="topological domain" description="Cytoplasmic" evidence="1">
    <location>
        <begin position="95"/>
        <end position="99"/>
    </location>
</feature>
<comment type="subcellular location">
    <subcellularLocation>
        <location evidence="2">Cell membrane</location>
        <topology evidence="2">Single-pass type I membrane protein</topology>
    </subcellularLocation>
</comment>
<protein>
    <recommendedName>
        <fullName>Small integral membrane protein 9</fullName>
    </recommendedName>
</protein>
<evidence type="ECO:0000255" key="1"/>
<evidence type="ECO:0000305" key="2"/>
<keyword id="KW-1003">Cell membrane</keyword>
<keyword id="KW-0472">Membrane</keyword>
<keyword id="KW-1185">Reference proteome</keyword>
<keyword id="KW-0732">Signal</keyword>
<keyword id="KW-0812">Transmembrane</keyword>
<keyword id="KW-1133">Transmembrane helix</keyword>
<reference key="1">
    <citation type="journal article" date="2005" name="Nature">
        <title>The DNA sequence of the human X chromosome.</title>
        <authorList>
            <person name="Ross M.T."/>
            <person name="Grafham D.V."/>
            <person name="Coffey A.J."/>
            <person name="Scherer S."/>
            <person name="McLay K."/>
            <person name="Muzny D."/>
            <person name="Platzer M."/>
            <person name="Howell G.R."/>
            <person name="Burrows C."/>
            <person name="Bird C.P."/>
            <person name="Frankish A."/>
            <person name="Lovell F.L."/>
            <person name="Howe K.L."/>
            <person name="Ashurst J.L."/>
            <person name="Fulton R.S."/>
            <person name="Sudbrak R."/>
            <person name="Wen G."/>
            <person name="Jones M.C."/>
            <person name="Hurles M.E."/>
            <person name="Andrews T.D."/>
            <person name="Scott C.E."/>
            <person name="Searle S."/>
            <person name="Ramser J."/>
            <person name="Whittaker A."/>
            <person name="Deadman R."/>
            <person name="Carter N.P."/>
            <person name="Hunt S.E."/>
            <person name="Chen R."/>
            <person name="Cree A."/>
            <person name="Gunaratne P."/>
            <person name="Havlak P."/>
            <person name="Hodgson A."/>
            <person name="Metzker M.L."/>
            <person name="Richards S."/>
            <person name="Scott G."/>
            <person name="Steffen D."/>
            <person name="Sodergren E."/>
            <person name="Wheeler D.A."/>
            <person name="Worley K.C."/>
            <person name="Ainscough R."/>
            <person name="Ambrose K.D."/>
            <person name="Ansari-Lari M.A."/>
            <person name="Aradhya S."/>
            <person name="Ashwell R.I."/>
            <person name="Babbage A.K."/>
            <person name="Bagguley C.L."/>
            <person name="Ballabio A."/>
            <person name="Banerjee R."/>
            <person name="Barker G.E."/>
            <person name="Barlow K.F."/>
            <person name="Barrett I.P."/>
            <person name="Bates K.N."/>
            <person name="Beare D.M."/>
            <person name="Beasley H."/>
            <person name="Beasley O."/>
            <person name="Beck A."/>
            <person name="Bethel G."/>
            <person name="Blechschmidt K."/>
            <person name="Brady N."/>
            <person name="Bray-Allen S."/>
            <person name="Bridgeman A.M."/>
            <person name="Brown A.J."/>
            <person name="Brown M.J."/>
            <person name="Bonnin D."/>
            <person name="Bruford E.A."/>
            <person name="Buhay C."/>
            <person name="Burch P."/>
            <person name="Burford D."/>
            <person name="Burgess J."/>
            <person name="Burrill W."/>
            <person name="Burton J."/>
            <person name="Bye J.M."/>
            <person name="Carder C."/>
            <person name="Carrel L."/>
            <person name="Chako J."/>
            <person name="Chapman J.C."/>
            <person name="Chavez D."/>
            <person name="Chen E."/>
            <person name="Chen G."/>
            <person name="Chen Y."/>
            <person name="Chen Z."/>
            <person name="Chinault C."/>
            <person name="Ciccodicola A."/>
            <person name="Clark S.Y."/>
            <person name="Clarke G."/>
            <person name="Clee C.M."/>
            <person name="Clegg S."/>
            <person name="Clerc-Blankenburg K."/>
            <person name="Clifford K."/>
            <person name="Cobley V."/>
            <person name="Cole C.G."/>
            <person name="Conquer J.S."/>
            <person name="Corby N."/>
            <person name="Connor R.E."/>
            <person name="David R."/>
            <person name="Davies J."/>
            <person name="Davis C."/>
            <person name="Davis J."/>
            <person name="Delgado O."/>
            <person name="Deshazo D."/>
            <person name="Dhami P."/>
            <person name="Ding Y."/>
            <person name="Dinh H."/>
            <person name="Dodsworth S."/>
            <person name="Draper H."/>
            <person name="Dugan-Rocha S."/>
            <person name="Dunham A."/>
            <person name="Dunn M."/>
            <person name="Durbin K.J."/>
            <person name="Dutta I."/>
            <person name="Eades T."/>
            <person name="Ellwood M."/>
            <person name="Emery-Cohen A."/>
            <person name="Errington H."/>
            <person name="Evans K.L."/>
            <person name="Faulkner L."/>
            <person name="Francis F."/>
            <person name="Frankland J."/>
            <person name="Fraser A.E."/>
            <person name="Galgoczy P."/>
            <person name="Gilbert J."/>
            <person name="Gill R."/>
            <person name="Gloeckner G."/>
            <person name="Gregory S.G."/>
            <person name="Gribble S."/>
            <person name="Griffiths C."/>
            <person name="Grocock R."/>
            <person name="Gu Y."/>
            <person name="Gwilliam R."/>
            <person name="Hamilton C."/>
            <person name="Hart E.A."/>
            <person name="Hawes A."/>
            <person name="Heath P.D."/>
            <person name="Heitmann K."/>
            <person name="Hennig S."/>
            <person name="Hernandez J."/>
            <person name="Hinzmann B."/>
            <person name="Ho S."/>
            <person name="Hoffs M."/>
            <person name="Howden P.J."/>
            <person name="Huckle E.J."/>
            <person name="Hume J."/>
            <person name="Hunt P.J."/>
            <person name="Hunt A.R."/>
            <person name="Isherwood J."/>
            <person name="Jacob L."/>
            <person name="Johnson D."/>
            <person name="Jones S."/>
            <person name="de Jong P.J."/>
            <person name="Joseph S.S."/>
            <person name="Keenan S."/>
            <person name="Kelly S."/>
            <person name="Kershaw J.K."/>
            <person name="Khan Z."/>
            <person name="Kioschis P."/>
            <person name="Klages S."/>
            <person name="Knights A.J."/>
            <person name="Kosiura A."/>
            <person name="Kovar-Smith C."/>
            <person name="Laird G.K."/>
            <person name="Langford C."/>
            <person name="Lawlor S."/>
            <person name="Leversha M."/>
            <person name="Lewis L."/>
            <person name="Liu W."/>
            <person name="Lloyd C."/>
            <person name="Lloyd D.M."/>
            <person name="Loulseged H."/>
            <person name="Loveland J.E."/>
            <person name="Lovell J.D."/>
            <person name="Lozado R."/>
            <person name="Lu J."/>
            <person name="Lyne R."/>
            <person name="Ma J."/>
            <person name="Maheshwari M."/>
            <person name="Matthews L.H."/>
            <person name="McDowall J."/>
            <person name="McLaren S."/>
            <person name="McMurray A."/>
            <person name="Meidl P."/>
            <person name="Meitinger T."/>
            <person name="Milne S."/>
            <person name="Miner G."/>
            <person name="Mistry S.L."/>
            <person name="Morgan M."/>
            <person name="Morris S."/>
            <person name="Mueller I."/>
            <person name="Mullikin J.C."/>
            <person name="Nguyen N."/>
            <person name="Nordsiek G."/>
            <person name="Nyakatura G."/>
            <person name="O'dell C.N."/>
            <person name="Okwuonu G."/>
            <person name="Palmer S."/>
            <person name="Pandian R."/>
            <person name="Parker D."/>
            <person name="Parrish J."/>
            <person name="Pasternak S."/>
            <person name="Patel D."/>
            <person name="Pearce A.V."/>
            <person name="Pearson D.M."/>
            <person name="Pelan S.E."/>
            <person name="Perez L."/>
            <person name="Porter K.M."/>
            <person name="Ramsey Y."/>
            <person name="Reichwald K."/>
            <person name="Rhodes S."/>
            <person name="Ridler K.A."/>
            <person name="Schlessinger D."/>
            <person name="Schueler M.G."/>
            <person name="Sehra H.K."/>
            <person name="Shaw-Smith C."/>
            <person name="Shen H."/>
            <person name="Sheridan E.M."/>
            <person name="Shownkeen R."/>
            <person name="Skuce C.D."/>
            <person name="Smith M.L."/>
            <person name="Sotheran E.C."/>
            <person name="Steingruber H.E."/>
            <person name="Steward C.A."/>
            <person name="Storey R."/>
            <person name="Swann R.M."/>
            <person name="Swarbreck D."/>
            <person name="Tabor P.E."/>
            <person name="Taudien S."/>
            <person name="Taylor T."/>
            <person name="Teague B."/>
            <person name="Thomas K."/>
            <person name="Thorpe A."/>
            <person name="Timms K."/>
            <person name="Tracey A."/>
            <person name="Trevanion S."/>
            <person name="Tromans A.C."/>
            <person name="d'Urso M."/>
            <person name="Verduzco D."/>
            <person name="Villasana D."/>
            <person name="Waldron L."/>
            <person name="Wall M."/>
            <person name="Wang Q."/>
            <person name="Warren J."/>
            <person name="Warry G.L."/>
            <person name="Wei X."/>
            <person name="West A."/>
            <person name="Whitehead S.L."/>
            <person name="Whiteley M.N."/>
            <person name="Wilkinson J.E."/>
            <person name="Willey D.L."/>
            <person name="Williams G."/>
            <person name="Williams L."/>
            <person name="Williamson A."/>
            <person name="Williamson H."/>
            <person name="Wilming L."/>
            <person name="Woodmansey R.L."/>
            <person name="Wray P.W."/>
            <person name="Yen J."/>
            <person name="Zhang J."/>
            <person name="Zhou J."/>
            <person name="Zoghbi H."/>
            <person name="Zorilla S."/>
            <person name="Buck D."/>
            <person name="Reinhardt R."/>
            <person name="Poustka A."/>
            <person name="Rosenthal A."/>
            <person name="Lehrach H."/>
            <person name="Meindl A."/>
            <person name="Minx P.J."/>
            <person name="Hillier L.W."/>
            <person name="Willard H.F."/>
            <person name="Wilson R.K."/>
            <person name="Waterston R.H."/>
            <person name="Rice C.M."/>
            <person name="Vaudin M."/>
            <person name="Coulson A."/>
            <person name="Nelson D.L."/>
            <person name="Weinstock G."/>
            <person name="Sulston J.E."/>
            <person name="Durbin R.M."/>
            <person name="Hubbard T."/>
            <person name="Gibbs R.A."/>
            <person name="Beck S."/>
            <person name="Rogers J."/>
            <person name="Bentley D.R."/>
        </authorList>
    </citation>
    <scope>NUCLEOTIDE SEQUENCE [LARGE SCALE GENOMIC DNA]</scope>
</reference>
<reference key="2">
    <citation type="submission" date="2005-09" db="EMBL/GenBank/DDBJ databases">
        <authorList>
            <person name="Mural R.J."/>
            <person name="Istrail S."/>
            <person name="Sutton G.G."/>
            <person name="Florea L."/>
            <person name="Halpern A.L."/>
            <person name="Mobarry C.M."/>
            <person name="Lippert R."/>
            <person name="Walenz B."/>
            <person name="Shatkay H."/>
            <person name="Dew I."/>
            <person name="Miller J.R."/>
            <person name="Flanigan M.J."/>
            <person name="Edwards N.J."/>
            <person name="Bolanos R."/>
            <person name="Fasulo D."/>
            <person name="Halldorsson B.V."/>
            <person name="Hannenhalli S."/>
            <person name="Turner R."/>
            <person name="Yooseph S."/>
            <person name="Lu F."/>
            <person name="Nusskern D.R."/>
            <person name="Shue B.C."/>
            <person name="Zheng X.H."/>
            <person name="Zhong F."/>
            <person name="Delcher A.L."/>
            <person name="Huson D.H."/>
            <person name="Kravitz S.A."/>
            <person name="Mouchard L."/>
            <person name="Reinert K."/>
            <person name="Remington K.A."/>
            <person name="Clark A.G."/>
            <person name="Waterman M.S."/>
            <person name="Eichler E.E."/>
            <person name="Adams M.D."/>
            <person name="Hunkapiller M.W."/>
            <person name="Myers E.W."/>
            <person name="Venter J.C."/>
        </authorList>
    </citation>
    <scope>NUCLEOTIDE SEQUENCE [LARGE SCALE GENOMIC DNA]</scope>
</reference>
<sequence length="99" mass="10777">MEPQKLLIIGFLLCSLTCLLLETVASSPLPLSALGIQEKTGSKPRSGGNHRSWLNNFRDYLWQLIKSALPPAAIVAFLLTSALMGILCCFTILVVDPVH</sequence>
<organism>
    <name type="scientific">Homo sapiens</name>
    <name type="common">Human</name>
    <dbReference type="NCBI Taxonomy" id="9606"/>
    <lineage>
        <taxon>Eukaryota</taxon>
        <taxon>Metazoa</taxon>
        <taxon>Chordata</taxon>
        <taxon>Craniata</taxon>
        <taxon>Vertebrata</taxon>
        <taxon>Euteleostomi</taxon>
        <taxon>Mammalia</taxon>
        <taxon>Eutheria</taxon>
        <taxon>Euarchontoglires</taxon>
        <taxon>Primates</taxon>
        <taxon>Haplorrhini</taxon>
        <taxon>Catarrhini</taxon>
        <taxon>Hominidae</taxon>
        <taxon>Homo</taxon>
    </lineage>
</organism>
<name>SMIM9_HUMAN</name>
<gene>
    <name type="primary">SMIM9</name>
    <name type="synonym">CXorf68</name>
</gene>
<dbReference type="EMBL" id="AC109993">
    <property type="status" value="NOT_ANNOTATED_CDS"/>
    <property type="molecule type" value="Genomic_DNA"/>
</dbReference>
<dbReference type="EMBL" id="CH471172">
    <property type="protein sequence ID" value="EAW72652.1"/>
    <property type="molecule type" value="Genomic_DNA"/>
</dbReference>
<dbReference type="CCDS" id="CCDS55546.1"/>
<dbReference type="RefSeq" id="NP_001156408.1">
    <property type="nucleotide sequence ID" value="NM_001162936.4"/>
</dbReference>
<dbReference type="STRING" id="9606.ENSP00000358542"/>
<dbReference type="iPTMnet" id="A6NGZ8"/>
<dbReference type="PhosphoSitePlus" id="A6NGZ8"/>
<dbReference type="BioMuta" id="SMIM9"/>
<dbReference type="PaxDb" id="9606-ENSP00000358542"/>
<dbReference type="Antibodypedia" id="71256">
    <property type="antibodies" value="5 antibodies from 5 providers"/>
</dbReference>
<dbReference type="DNASU" id="100132963"/>
<dbReference type="Ensembl" id="ENST00000369529.2">
    <property type="protein sequence ID" value="ENSP00000358542.1"/>
    <property type="gene ID" value="ENSG00000203870.6"/>
</dbReference>
<dbReference type="GeneID" id="100132963"/>
<dbReference type="KEGG" id="hsa:100132963"/>
<dbReference type="MANE-Select" id="ENST00000369529.2">
    <property type="protein sequence ID" value="ENSP00000358542.1"/>
    <property type="RefSeq nucleotide sequence ID" value="NM_001162936.4"/>
    <property type="RefSeq protein sequence ID" value="NP_001156408.1"/>
</dbReference>
<dbReference type="UCSC" id="uc065cja.1">
    <property type="organism name" value="human"/>
</dbReference>
<dbReference type="AGR" id="HGNC:41915"/>
<dbReference type="CTD" id="100132963"/>
<dbReference type="GeneCards" id="SMIM9"/>
<dbReference type="HGNC" id="HGNC:41915">
    <property type="gene designation" value="SMIM9"/>
</dbReference>
<dbReference type="HPA" id="ENSG00000203870">
    <property type="expression patterns" value="Not detected"/>
</dbReference>
<dbReference type="neXtProt" id="NX_A6NGZ8"/>
<dbReference type="VEuPathDB" id="HostDB:ENSG00000203870"/>
<dbReference type="eggNOG" id="ENOG502TKME">
    <property type="taxonomic scope" value="Eukaryota"/>
</dbReference>
<dbReference type="GeneTree" id="ENSGT00390000005685"/>
<dbReference type="HOGENOM" id="CLU_181647_0_0_1"/>
<dbReference type="InParanoid" id="A6NGZ8"/>
<dbReference type="OMA" id="HRSWLNN"/>
<dbReference type="OrthoDB" id="9537610at2759"/>
<dbReference type="PAN-GO" id="A6NGZ8">
    <property type="GO annotations" value="0 GO annotations based on evolutionary models"/>
</dbReference>
<dbReference type="PhylomeDB" id="A6NGZ8"/>
<dbReference type="TreeFam" id="TF354094"/>
<dbReference type="PathwayCommons" id="A6NGZ8"/>
<dbReference type="BioGRID-ORCS" id="100132963">
    <property type="hits" value="8 hits in 761 CRISPR screens"/>
</dbReference>
<dbReference type="GenomeRNAi" id="100132963"/>
<dbReference type="Pharos" id="A6NGZ8">
    <property type="development level" value="Tdark"/>
</dbReference>
<dbReference type="PRO" id="PR:A6NGZ8"/>
<dbReference type="Proteomes" id="UP000005640">
    <property type="component" value="Chromosome X"/>
</dbReference>
<dbReference type="RNAct" id="A6NGZ8">
    <property type="molecule type" value="protein"/>
</dbReference>
<dbReference type="Bgee" id="ENSG00000203870">
    <property type="expression patterns" value="Expressed in male germ line stem cell (sensu Vertebrata) in testis and 79 other cell types or tissues"/>
</dbReference>
<dbReference type="GO" id="GO:0005886">
    <property type="term" value="C:plasma membrane"/>
    <property type="evidence" value="ECO:0007669"/>
    <property type="project" value="UniProtKB-SubCell"/>
</dbReference>
<dbReference type="InterPro" id="IPR038853">
    <property type="entry name" value="Smim9"/>
</dbReference>
<dbReference type="PANTHER" id="PTHR41687">
    <property type="entry name" value="SMALL INTEGRAL MEMBRANE PROTEIN 9"/>
    <property type="match status" value="1"/>
</dbReference>
<dbReference type="PANTHER" id="PTHR41687:SF1">
    <property type="entry name" value="SMALL INTEGRAL MEMBRANE PROTEIN 9"/>
    <property type="match status" value="1"/>
</dbReference>
<proteinExistence type="inferred from homology"/>